<dbReference type="EMBL" id="GU292951">
    <property type="protein sequence ID" value="ADB56767.1"/>
    <property type="molecule type" value="mRNA"/>
</dbReference>
<dbReference type="ArachnoServer" id="AS001571">
    <property type="toxin name" value="U11-theraphotoxin-Hhn1e"/>
</dbReference>
<dbReference type="GO" id="GO:0005576">
    <property type="term" value="C:extracellular region"/>
    <property type="evidence" value="ECO:0007669"/>
    <property type="project" value="UniProtKB-SubCell"/>
</dbReference>
<dbReference type="GO" id="GO:0019871">
    <property type="term" value="F:sodium channel inhibitor activity"/>
    <property type="evidence" value="ECO:0007669"/>
    <property type="project" value="InterPro"/>
</dbReference>
<dbReference type="GO" id="GO:0090729">
    <property type="term" value="F:toxin activity"/>
    <property type="evidence" value="ECO:0007669"/>
    <property type="project" value="UniProtKB-KW"/>
</dbReference>
<dbReference type="InterPro" id="IPR012627">
    <property type="entry name" value="Toxin_22"/>
</dbReference>
<dbReference type="Pfam" id="PF08092">
    <property type="entry name" value="Toxin_22"/>
    <property type="match status" value="1"/>
</dbReference>
<evidence type="ECO:0000250" key="1"/>
<evidence type="ECO:0000255" key="2"/>
<evidence type="ECO:0000256" key="3">
    <source>
        <dbReference type="SAM" id="MobiDB-lite"/>
    </source>
</evidence>
<evidence type="ECO:0000305" key="4"/>
<organism>
    <name type="scientific">Cyriopagopus hainanus</name>
    <name type="common">Chinese bird spider</name>
    <name type="synonym">Haplopelma hainanum</name>
    <dbReference type="NCBI Taxonomy" id="209901"/>
    <lineage>
        <taxon>Eukaryota</taxon>
        <taxon>Metazoa</taxon>
        <taxon>Ecdysozoa</taxon>
        <taxon>Arthropoda</taxon>
        <taxon>Chelicerata</taxon>
        <taxon>Arachnida</taxon>
        <taxon>Araneae</taxon>
        <taxon>Mygalomorphae</taxon>
        <taxon>Theraphosidae</taxon>
        <taxon>Haplopelma</taxon>
    </lineage>
</organism>
<accession>D2Y274</accession>
<proteinExistence type="evidence at transcript level"/>
<feature type="signal peptide" evidence="2">
    <location>
        <begin position="1"/>
        <end position="21"/>
    </location>
</feature>
<feature type="propeptide" id="PRO_0000400923" evidence="1">
    <location>
        <begin position="22"/>
        <end position="74"/>
    </location>
</feature>
<feature type="peptide" id="PRO_0000400924" description="U11-theraphotoxin-Hhn1e">
    <location>
        <begin position="75"/>
        <end position="113"/>
    </location>
</feature>
<feature type="region of interest" description="Disordered" evidence="3">
    <location>
        <begin position="60"/>
        <end position="87"/>
    </location>
</feature>
<feature type="compositionally biased region" description="Basic and acidic residues" evidence="3">
    <location>
        <begin position="60"/>
        <end position="69"/>
    </location>
</feature>
<feature type="disulfide bond" evidence="1">
    <location>
        <begin position="75"/>
        <end position="90"/>
    </location>
</feature>
<feature type="disulfide bond" evidence="1">
    <location>
        <begin position="89"/>
        <end position="110"/>
    </location>
</feature>
<name>H16E1_CYRHA</name>
<protein>
    <recommendedName>
        <fullName>U11-theraphotoxin-Hhn1e</fullName>
        <shortName>U11-TRTX-Hhn1e</shortName>
    </recommendedName>
    <alternativeName>
        <fullName>Hainantoxin-XVI-5</fullName>
        <shortName>HNTX-XVI-5</shortName>
    </alternativeName>
</protein>
<keyword id="KW-1015">Disulfide bond</keyword>
<keyword id="KW-0872">Ion channel impairing toxin</keyword>
<keyword id="KW-0960">Knottin</keyword>
<keyword id="KW-0964">Secreted</keyword>
<keyword id="KW-0732">Signal</keyword>
<keyword id="KW-0800">Toxin</keyword>
<reference key="1">
    <citation type="journal article" date="2010" name="J. Proteome Res.">
        <title>Molecular diversification of peptide toxins from the tarantula Haplopelma hainanum (Ornithoctonus hainana) venom based on transcriptomic, peptidomic, and genomic analyses.</title>
        <authorList>
            <person name="Tang X."/>
            <person name="Zhang Y."/>
            <person name="Hu W."/>
            <person name="Xu D."/>
            <person name="Tao H."/>
            <person name="Yang X."/>
            <person name="Li Y."/>
            <person name="Jiang L."/>
            <person name="Liang S."/>
        </authorList>
    </citation>
    <scope>NUCLEOTIDE SEQUENCE [LARGE SCALE MRNA]</scope>
    <source>
        <tissue>Venom gland</tissue>
    </source>
</reference>
<comment type="function">
    <text evidence="1">Probable ion channel inhibitor.</text>
</comment>
<comment type="subcellular location">
    <subcellularLocation>
        <location evidence="1">Secreted</location>
    </subcellularLocation>
</comment>
<comment type="tissue specificity">
    <text>Expressed by the venom gland.</text>
</comment>
<comment type="domain">
    <text evidence="1">The presence of a 'disulfide through disulfide knot' structurally defines this protein as a knottin.</text>
</comment>
<comment type="similarity">
    <text evidence="4">Belongs to the neurotoxin 14 (magi-1) family. 01 (HNTX-16) subfamily.</text>
</comment>
<comment type="caution">
    <text evidence="4">While it is structurally defined as a knottin it lacks the conserved Cys residue in position 82.</text>
</comment>
<sequence>MNTVRVTFLLVFVLAVSLGQADKDENRMEMLEKTEQGKSYLDFAENLLLQKLEELEARLLEEDSEESRNSRQKRCIGEGVPRDENDPRCCSGLVCLKPTLHGIWYKSYYCYKK</sequence>